<accession>Q5X245</accession>
<protein>
    <recommendedName>
        <fullName evidence="1">dITP/XTP pyrophosphatase</fullName>
        <ecNumber evidence="1">3.6.1.66</ecNumber>
    </recommendedName>
    <alternativeName>
        <fullName evidence="1">Non-canonical purine NTP pyrophosphatase</fullName>
    </alternativeName>
    <alternativeName>
        <fullName evidence="1">Non-standard purine NTP pyrophosphatase</fullName>
    </alternativeName>
    <alternativeName>
        <fullName evidence="1">Nucleoside-triphosphate diphosphatase</fullName>
    </alternativeName>
    <alternativeName>
        <fullName evidence="1">Nucleoside-triphosphate pyrophosphatase</fullName>
        <shortName evidence="1">NTPase</shortName>
    </alternativeName>
</protein>
<proteinExistence type="inferred from homology"/>
<comment type="function">
    <text evidence="1">Pyrophosphatase that catalyzes the hydrolysis of nucleoside triphosphates to their monophosphate derivatives, with a high preference for the non-canonical purine nucleotides XTP (xanthosine triphosphate), dITP (deoxyinosine triphosphate) and ITP. Seems to function as a house-cleaning enzyme that removes non-canonical purine nucleotides from the nucleotide pool, thus preventing their incorporation into DNA/RNA and avoiding chromosomal lesions.</text>
</comment>
<comment type="catalytic activity">
    <reaction evidence="1">
        <text>XTP + H2O = XMP + diphosphate + H(+)</text>
        <dbReference type="Rhea" id="RHEA:28610"/>
        <dbReference type="ChEBI" id="CHEBI:15377"/>
        <dbReference type="ChEBI" id="CHEBI:15378"/>
        <dbReference type="ChEBI" id="CHEBI:33019"/>
        <dbReference type="ChEBI" id="CHEBI:57464"/>
        <dbReference type="ChEBI" id="CHEBI:61314"/>
        <dbReference type="EC" id="3.6.1.66"/>
    </reaction>
</comment>
<comment type="catalytic activity">
    <reaction evidence="1">
        <text>dITP + H2O = dIMP + diphosphate + H(+)</text>
        <dbReference type="Rhea" id="RHEA:28342"/>
        <dbReference type="ChEBI" id="CHEBI:15377"/>
        <dbReference type="ChEBI" id="CHEBI:15378"/>
        <dbReference type="ChEBI" id="CHEBI:33019"/>
        <dbReference type="ChEBI" id="CHEBI:61194"/>
        <dbReference type="ChEBI" id="CHEBI:61382"/>
        <dbReference type="EC" id="3.6.1.66"/>
    </reaction>
</comment>
<comment type="catalytic activity">
    <reaction evidence="1">
        <text>ITP + H2O = IMP + diphosphate + H(+)</text>
        <dbReference type="Rhea" id="RHEA:29399"/>
        <dbReference type="ChEBI" id="CHEBI:15377"/>
        <dbReference type="ChEBI" id="CHEBI:15378"/>
        <dbReference type="ChEBI" id="CHEBI:33019"/>
        <dbReference type="ChEBI" id="CHEBI:58053"/>
        <dbReference type="ChEBI" id="CHEBI:61402"/>
        <dbReference type="EC" id="3.6.1.66"/>
    </reaction>
</comment>
<comment type="cofactor">
    <cofactor evidence="1">
        <name>Mg(2+)</name>
        <dbReference type="ChEBI" id="CHEBI:18420"/>
    </cofactor>
    <text evidence="1">Binds 1 Mg(2+) ion per subunit.</text>
</comment>
<comment type="subunit">
    <text evidence="1">Homodimer.</text>
</comment>
<comment type="similarity">
    <text evidence="1">Belongs to the HAM1 NTPase family.</text>
</comment>
<reference key="1">
    <citation type="journal article" date="2004" name="Nat. Genet.">
        <title>Evidence in the Legionella pneumophila genome for exploitation of host cell functions and high genome plasticity.</title>
        <authorList>
            <person name="Cazalet C."/>
            <person name="Rusniok C."/>
            <person name="Brueggemann H."/>
            <person name="Zidane N."/>
            <person name="Magnier A."/>
            <person name="Ma L."/>
            <person name="Tichit M."/>
            <person name="Jarraud S."/>
            <person name="Bouchier C."/>
            <person name="Vandenesch F."/>
            <person name="Kunst F."/>
            <person name="Etienne J."/>
            <person name="Glaser P."/>
            <person name="Buchrieser C."/>
        </authorList>
    </citation>
    <scope>NUCLEOTIDE SEQUENCE [LARGE SCALE GENOMIC DNA]</scope>
    <source>
        <strain>Paris</strain>
    </source>
</reference>
<evidence type="ECO:0000255" key="1">
    <source>
        <dbReference type="HAMAP-Rule" id="MF_01405"/>
    </source>
</evidence>
<keyword id="KW-0378">Hydrolase</keyword>
<keyword id="KW-0460">Magnesium</keyword>
<keyword id="KW-0479">Metal-binding</keyword>
<keyword id="KW-0546">Nucleotide metabolism</keyword>
<keyword id="KW-0547">Nucleotide-binding</keyword>
<dbReference type="EC" id="3.6.1.66" evidence="1"/>
<dbReference type="EMBL" id="CR628336">
    <property type="protein sequence ID" value="CAH13701.1"/>
    <property type="molecule type" value="Genomic_DNA"/>
</dbReference>
<dbReference type="SMR" id="Q5X245"/>
<dbReference type="KEGG" id="lpp:lpp2548"/>
<dbReference type="LegioList" id="lpp2548"/>
<dbReference type="HOGENOM" id="CLU_082080_0_3_6"/>
<dbReference type="GO" id="GO:0005829">
    <property type="term" value="C:cytosol"/>
    <property type="evidence" value="ECO:0007669"/>
    <property type="project" value="TreeGrafter"/>
</dbReference>
<dbReference type="GO" id="GO:0035870">
    <property type="term" value="F:dITP diphosphatase activity"/>
    <property type="evidence" value="ECO:0007669"/>
    <property type="project" value="RHEA"/>
</dbReference>
<dbReference type="GO" id="GO:0036220">
    <property type="term" value="F:ITP diphosphatase activity"/>
    <property type="evidence" value="ECO:0007669"/>
    <property type="project" value="UniProtKB-EC"/>
</dbReference>
<dbReference type="GO" id="GO:0046872">
    <property type="term" value="F:metal ion binding"/>
    <property type="evidence" value="ECO:0007669"/>
    <property type="project" value="UniProtKB-KW"/>
</dbReference>
<dbReference type="GO" id="GO:0000166">
    <property type="term" value="F:nucleotide binding"/>
    <property type="evidence" value="ECO:0007669"/>
    <property type="project" value="UniProtKB-KW"/>
</dbReference>
<dbReference type="GO" id="GO:0017111">
    <property type="term" value="F:ribonucleoside triphosphate phosphatase activity"/>
    <property type="evidence" value="ECO:0007669"/>
    <property type="project" value="InterPro"/>
</dbReference>
<dbReference type="GO" id="GO:0036222">
    <property type="term" value="F:XTP diphosphatase activity"/>
    <property type="evidence" value="ECO:0007669"/>
    <property type="project" value="RHEA"/>
</dbReference>
<dbReference type="GO" id="GO:0009117">
    <property type="term" value="P:nucleotide metabolic process"/>
    <property type="evidence" value="ECO:0007669"/>
    <property type="project" value="UniProtKB-KW"/>
</dbReference>
<dbReference type="GO" id="GO:0009146">
    <property type="term" value="P:purine nucleoside triphosphate catabolic process"/>
    <property type="evidence" value="ECO:0007669"/>
    <property type="project" value="UniProtKB-UniRule"/>
</dbReference>
<dbReference type="CDD" id="cd00515">
    <property type="entry name" value="HAM1"/>
    <property type="match status" value="1"/>
</dbReference>
<dbReference type="FunFam" id="3.90.950.10:FF:000001">
    <property type="entry name" value="dITP/XTP pyrophosphatase"/>
    <property type="match status" value="1"/>
</dbReference>
<dbReference type="Gene3D" id="3.90.950.10">
    <property type="match status" value="1"/>
</dbReference>
<dbReference type="HAMAP" id="MF_01405">
    <property type="entry name" value="Non_canon_purine_NTPase"/>
    <property type="match status" value="1"/>
</dbReference>
<dbReference type="InterPro" id="IPR020922">
    <property type="entry name" value="dITP/XTP_pyrophosphatase"/>
</dbReference>
<dbReference type="InterPro" id="IPR029001">
    <property type="entry name" value="ITPase-like_fam"/>
</dbReference>
<dbReference type="InterPro" id="IPR002637">
    <property type="entry name" value="RdgB/HAM1"/>
</dbReference>
<dbReference type="NCBIfam" id="TIGR00042">
    <property type="entry name" value="RdgB/HAM1 family non-canonical purine NTP pyrophosphatase"/>
    <property type="match status" value="1"/>
</dbReference>
<dbReference type="PANTHER" id="PTHR11067:SF9">
    <property type="entry name" value="INOSINE TRIPHOSPHATE PYROPHOSPHATASE"/>
    <property type="match status" value="1"/>
</dbReference>
<dbReference type="PANTHER" id="PTHR11067">
    <property type="entry name" value="INOSINE TRIPHOSPHATE PYROPHOSPHATASE/HAM1 PROTEIN"/>
    <property type="match status" value="1"/>
</dbReference>
<dbReference type="Pfam" id="PF01725">
    <property type="entry name" value="Ham1p_like"/>
    <property type="match status" value="1"/>
</dbReference>
<dbReference type="SUPFAM" id="SSF52972">
    <property type="entry name" value="ITPase-like"/>
    <property type="match status" value="1"/>
</dbReference>
<sequence>MKEIILATSNPGKIKELEQLLAPTICIPQADLGIFDAEETGLSFIENAILKARHASSLANKPALADDSGLVVPSLNGEPGIYSARYAGRKANDEDNIQQLLSKMADLSQEQRQAYFFCAIALMQHAKDPTPIIATGIFHGIISVKPSGTNGFGYDPVFYLNEYQCTAAELPAKIKNRISHRAKALNQLRALLPD</sequence>
<name>IXTPA_LEGPA</name>
<organism>
    <name type="scientific">Legionella pneumophila (strain Paris)</name>
    <dbReference type="NCBI Taxonomy" id="297246"/>
    <lineage>
        <taxon>Bacteria</taxon>
        <taxon>Pseudomonadati</taxon>
        <taxon>Pseudomonadota</taxon>
        <taxon>Gammaproteobacteria</taxon>
        <taxon>Legionellales</taxon>
        <taxon>Legionellaceae</taxon>
        <taxon>Legionella</taxon>
    </lineage>
</organism>
<feature type="chain" id="PRO_0000178181" description="dITP/XTP pyrophosphatase">
    <location>
        <begin position="1"/>
        <end position="194"/>
    </location>
</feature>
<feature type="active site" description="Proton acceptor" evidence="1">
    <location>
        <position position="67"/>
    </location>
</feature>
<feature type="binding site" evidence="1">
    <location>
        <begin position="8"/>
        <end position="13"/>
    </location>
    <ligand>
        <name>substrate</name>
    </ligand>
</feature>
<feature type="binding site" evidence="1">
    <location>
        <position position="38"/>
    </location>
    <ligand>
        <name>Mg(2+)</name>
        <dbReference type="ChEBI" id="CHEBI:18420"/>
    </ligand>
</feature>
<feature type="binding site" evidence="1">
    <location>
        <position position="67"/>
    </location>
    <ligand>
        <name>Mg(2+)</name>
        <dbReference type="ChEBI" id="CHEBI:18420"/>
    </ligand>
</feature>
<feature type="binding site" evidence="1">
    <location>
        <position position="68"/>
    </location>
    <ligand>
        <name>substrate</name>
    </ligand>
</feature>
<feature type="binding site" evidence="1">
    <location>
        <begin position="152"/>
        <end position="155"/>
    </location>
    <ligand>
        <name>substrate</name>
    </ligand>
</feature>
<feature type="binding site" evidence="1">
    <location>
        <position position="175"/>
    </location>
    <ligand>
        <name>substrate</name>
    </ligand>
</feature>
<feature type="binding site" evidence="1">
    <location>
        <begin position="180"/>
        <end position="181"/>
    </location>
    <ligand>
        <name>substrate</name>
    </ligand>
</feature>
<gene>
    <name type="ordered locus">lpp2548</name>
</gene>